<keyword id="KW-0067">ATP-binding</keyword>
<keyword id="KW-0175">Coiled coil</keyword>
<keyword id="KW-0963">Cytoplasm</keyword>
<keyword id="KW-0206">Cytoskeleton</keyword>
<keyword id="KW-0493">Microtubule</keyword>
<keyword id="KW-0505">Motor protein</keyword>
<keyword id="KW-0547">Nucleotide-binding</keyword>
<keyword id="KW-1185">Reference proteome</keyword>
<keyword id="KW-0813">Transport</keyword>
<gene>
    <name type="primary">kif5</name>
    <name type="synonym">kin5</name>
    <name type="ORF">DDB_G0276369</name>
</gene>
<organism>
    <name type="scientific">Dictyostelium discoideum</name>
    <name type="common">Social amoeba</name>
    <dbReference type="NCBI Taxonomy" id="44689"/>
    <lineage>
        <taxon>Eukaryota</taxon>
        <taxon>Amoebozoa</taxon>
        <taxon>Evosea</taxon>
        <taxon>Eumycetozoa</taxon>
        <taxon>Dictyostelia</taxon>
        <taxon>Dictyosteliales</taxon>
        <taxon>Dictyosteliaceae</taxon>
        <taxon>Dictyostelium</taxon>
    </lineage>
</organism>
<accession>Q8T135</accession>
<accession>Q551S3</accession>
<dbReference type="EMBL" id="AB102778">
    <property type="protein sequence ID" value="BAC56910.1"/>
    <property type="molecule type" value="mRNA"/>
</dbReference>
<dbReference type="EMBL" id="AAFI02000014">
    <property type="protein sequence ID" value="EAL69265.1"/>
    <property type="molecule type" value="Genomic_DNA"/>
</dbReference>
<dbReference type="RefSeq" id="XP_643173.1">
    <property type="nucleotide sequence ID" value="XM_638081.1"/>
</dbReference>
<dbReference type="SMR" id="Q8T135"/>
<dbReference type="STRING" id="44689.Q8T135"/>
<dbReference type="GlyGen" id="Q8T135">
    <property type="glycosylation" value="1 site"/>
</dbReference>
<dbReference type="PaxDb" id="44689-DDB0185205"/>
<dbReference type="EnsemblProtists" id="EAL69265">
    <property type="protein sequence ID" value="EAL69265"/>
    <property type="gene ID" value="DDB_G0276369"/>
</dbReference>
<dbReference type="GeneID" id="8620445"/>
<dbReference type="KEGG" id="ddi:DDB_G0276369"/>
<dbReference type="dictyBase" id="DDB_G0276369">
    <property type="gene designation" value="kif5"/>
</dbReference>
<dbReference type="VEuPathDB" id="AmoebaDB:DDB_G0276369"/>
<dbReference type="eggNOG" id="KOG0240">
    <property type="taxonomic scope" value="Eukaryota"/>
</dbReference>
<dbReference type="HOGENOM" id="CLU_301776_0_0_1"/>
<dbReference type="InParanoid" id="Q8T135"/>
<dbReference type="OMA" id="MATSCNI"/>
<dbReference type="PRO" id="PR:Q8T135"/>
<dbReference type="Proteomes" id="UP000002195">
    <property type="component" value="Chromosome 2"/>
</dbReference>
<dbReference type="GO" id="GO:0031252">
    <property type="term" value="C:cell leading edge"/>
    <property type="evidence" value="ECO:0000314"/>
    <property type="project" value="dictyBase"/>
</dbReference>
<dbReference type="GO" id="GO:0030864">
    <property type="term" value="C:cortical actin cytoskeleton"/>
    <property type="evidence" value="ECO:0000314"/>
    <property type="project" value="dictyBase"/>
</dbReference>
<dbReference type="GO" id="GO:0005737">
    <property type="term" value="C:cytoplasm"/>
    <property type="evidence" value="ECO:0000314"/>
    <property type="project" value="dictyBase"/>
</dbReference>
<dbReference type="GO" id="GO:0005874">
    <property type="term" value="C:microtubule"/>
    <property type="evidence" value="ECO:0007669"/>
    <property type="project" value="UniProtKB-KW"/>
</dbReference>
<dbReference type="GO" id="GO:0051015">
    <property type="term" value="F:actin filament binding"/>
    <property type="evidence" value="ECO:0000314"/>
    <property type="project" value="dictyBase"/>
</dbReference>
<dbReference type="GO" id="GO:0005524">
    <property type="term" value="F:ATP binding"/>
    <property type="evidence" value="ECO:0000304"/>
    <property type="project" value="dictyBase"/>
</dbReference>
<dbReference type="GO" id="GO:0008017">
    <property type="term" value="F:microtubule binding"/>
    <property type="evidence" value="ECO:0000314"/>
    <property type="project" value="dictyBase"/>
</dbReference>
<dbReference type="GO" id="GO:0003777">
    <property type="term" value="F:microtubule motor activity"/>
    <property type="evidence" value="ECO:0007669"/>
    <property type="project" value="InterPro"/>
</dbReference>
<dbReference type="GO" id="GO:0051017">
    <property type="term" value="P:actin filament bundle assembly"/>
    <property type="evidence" value="ECO:0000314"/>
    <property type="project" value="dictyBase"/>
</dbReference>
<dbReference type="GO" id="GO:0007018">
    <property type="term" value="P:microtubule-based movement"/>
    <property type="evidence" value="ECO:0007669"/>
    <property type="project" value="InterPro"/>
</dbReference>
<dbReference type="FunFam" id="3.40.850.10:FF:000019">
    <property type="entry name" value="Kinesin-like protein KIN-5D"/>
    <property type="match status" value="1"/>
</dbReference>
<dbReference type="Gene3D" id="3.40.850.10">
    <property type="entry name" value="Kinesin motor domain"/>
    <property type="match status" value="1"/>
</dbReference>
<dbReference type="InterPro" id="IPR027640">
    <property type="entry name" value="Kinesin-like_fam"/>
</dbReference>
<dbReference type="InterPro" id="IPR019821">
    <property type="entry name" value="Kinesin_motor_CS"/>
</dbReference>
<dbReference type="InterPro" id="IPR001752">
    <property type="entry name" value="Kinesin_motor_dom"/>
</dbReference>
<dbReference type="InterPro" id="IPR036961">
    <property type="entry name" value="Kinesin_motor_dom_sf"/>
</dbReference>
<dbReference type="InterPro" id="IPR027417">
    <property type="entry name" value="P-loop_NTPase"/>
</dbReference>
<dbReference type="PANTHER" id="PTHR47968">
    <property type="entry name" value="CENTROMERE PROTEIN E"/>
    <property type="match status" value="1"/>
</dbReference>
<dbReference type="PANTHER" id="PTHR47968:SF75">
    <property type="entry name" value="CENTROMERE-ASSOCIATED PROTEIN E"/>
    <property type="match status" value="1"/>
</dbReference>
<dbReference type="Pfam" id="PF00225">
    <property type="entry name" value="Kinesin"/>
    <property type="match status" value="1"/>
</dbReference>
<dbReference type="PRINTS" id="PR00380">
    <property type="entry name" value="KINESINHEAVY"/>
</dbReference>
<dbReference type="SMART" id="SM00129">
    <property type="entry name" value="KISc"/>
    <property type="match status" value="1"/>
</dbReference>
<dbReference type="SUPFAM" id="SSF52540">
    <property type="entry name" value="P-loop containing nucleoside triphosphate hydrolases"/>
    <property type="match status" value="1"/>
</dbReference>
<dbReference type="PROSITE" id="PS00411">
    <property type="entry name" value="KINESIN_MOTOR_1"/>
    <property type="match status" value="1"/>
</dbReference>
<dbReference type="PROSITE" id="PS50067">
    <property type="entry name" value="KINESIN_MOTOR_2"/>
    <property type="match status" value="1"/>
</dbReference>
<proteinExistence type="evidence at protein level"/>
<evidence type="ECO:0000250" key="1"/>
<evidence type="ECO:0000255" key="2"/>
<evidence type="ECO:0000255" key="3">
    <source>
        <dbReference type="PROSITE-ProRule" id="PRU00283"/>
    </source>
</evidence>
<evidence type="ECO:0000256" key="4">
    <source>
        <dbReference type="SAM" id="MobiDB-lite"/>
    </source>
</evidence>
<evidence type="ECO:0000269" key="5">
    <source>
    </source>
</evidence>
<reference key="1">
    <citation type="journal article" date="2004" name="J. Biol. Chem.">
        <title>A novel actin-bundling kinesin-related protein from Dictyostelium discoideum.</title>
        <authorList>
            <person name="Iwai S."/>
            <person name="Ishiji A."/>
            <person name="Mabuchi I."/>
            <person name="Sutoh K."/>
        </authorList>
    </citation>
    <scope>NUCLEOTIDE SEQUENCE [MRNA]</scope>
    <scope>FUNCTION</scope>
    <scope>SUBCELLULAR LOCATION</scope>
    <scope>INTERACTION WITH ACTIN</scope>
</reference>
<reference key="2">
    <citation type="journal article" date="2002" name="Nature">
        <title>Sequence and analysis of chromosome 2 of Dictyostelium discoideum.</title>
        <authorList>
            <person name="Gloeckner G."/>
            <person name="Eichinger L."/>
            <person name="Szafranski K."/>
            <person name="Pachebat J.A."/>
            <person name="Bankier A.T."/>
            <person name="Dear P.H."/>
            <person name="Lehmann R."/>
            <person name="Baumgart C."/>
            <person name="Parra G."/>
            <person name="Abril J.F."/>
            <person name="Guigo R."/>
            <person name="Kumpf K."/>
            <person name="Tunggal B."/>
            <person name="Cox E.C."/>
            <person name="Quail M.A."/>
            <person name="Platzer M."/>
            <person name="Rosenthal A."/>
            <person name="Noegel A.A."/>
        </authorList>
    </citation>
    <scope>NUCLEOTIDE SEQUENCE [LARGE SCALE GENOMIC DNA]</scope>
    <source>
        <strain>AX4</strain>
    </source>
</reference>
<reference key="3">
    <citation type="journal article" date="2005" name="Nature">
        <title>The genome of the social amoeba Dictyostelium discoideum.</title>
        <authorList>
            <person name="Eichinger L."/>
            <person name="Pachebat J.A."/>
            <person name="Gloeckner G."/>
            <person name="Rajandream M.A."/>
            <person name="Sucgang R."/>
            <person name="Berriman M."/>
            <person name="Song J."/>
            <person name="Olsen R."/>
            <person name="Szafranski K."/>
            <person name="Xu Q."/>
            <person name="Tunggal B."/>
            <person name="Kummerfeld S."/>
            <person name="Madera M."/>
            <person name="Konfortov B.A."/>
            <person name="Rivero F."/>
            <person name="Bankier A.T."/>
            <person name="Lehmann R."/>
            <person name="Hamlin N."/>
            <person name="Davies R."/>
            <person name="Gaudet P."/>
            <person name="Fey P."/>
            <person name="Pilcher K."/>
            <person name="Chen G."/>
            <person name="Saunders D."/>
            <person name="Sodergren E.J."/>
            <person name="Davis P."/>
            <person name="Kerhornou A."/>
            <person name="Nie X."/>
            <person name="Hall N."/>
            <person name="Anjard C."/>
            <person name="Hemphill L."/>
            <person name="Bason N."/>
            <person name="Farbrother P."/>
            <person name="Desany B."/>
            <person name="Just E."/>
            <person name="Morio T."/>
            <person name="Rost R."/>
            <person name="Churcher C.M."/>
            <person name="Cooper J."/>
            <person name="Haydock S."/>
            <person name="van Driessche N."/>
            <person name="Cronin A."/>
            <person name="Goodhead I."/>
            <person name="Muzny D.M."/>
            <person name="Mourier T."/>
            <person name="Pain A."/>
            <person name="Lu M."/>
            <person name="Harper D."/>
            <person name="Lindsay R."/>
            <person name="Hauser H."/>
            <person name="James K.D."/>
            <person name="Quiles M."/>
            <person name="Madan Babu M."/>
            <person name="Saito T."/>
            <person name="Buchrieser C."/>
            <person name="Wardroper A."/>
            <person name="Felder M."/>
            <person name="Thangavelu M."/>
            <person name="Johnson D."/>
            <person name="Knights A."/>
            <person name="Loulseged H."/>
            <person name="Mungall K.L."/>
            <person name="Oliver K."/>
            <person name="Price C."/>
            <person name="Quail M.A."/>
            <person name="Urushihara H."/>
            <person name="Hernandez J."/>
            <person name="Rabbinowitsch E."/>
            <person name="Steffen D."/>
            <person name="Sanders M."/>
            <person name="Ma J."/>
            <person name="Kohara Y."/>
            <person name="Sharp S."/>
            <person name="Simmonds M.N."/>
            <person name="Spiegler S."/>
            <person name="Tivey A."/>
            <person name="Sugano S."/>
            <person name="White B."/>
            <person name="Walker D."/>
            <person name="Woodward J.R."/>
            <person name="Winckler T."/>
            <person name="Tanaka Y."/>
            <person name="Shaulsky G."/>
            <person name="Schleicher M."/>
            <person name="Weinstock G.M."/>
            <person name="Rosenthal A."/>
            <person name="Cox E.C."/>
            <person name="Chisholm R.L."/>
            <person name="Gibbs R.A."/>
            <person name="Loomis W.F."/>
            <person name="Platzer M."/>
            <person name="Kay R.R."/>
            <person name="Williams J.G."/>
            <person name="Dear P.H."/>
            <person name="Noegel A.A."/>
            <person name="Barrell B.G."/>
            <person name="Kuspa A."/>
        </authorList>
    </citation>
    <scope>NUCLEOTIDE SEQUENCE [LARGE SCALE GENOMIC DNA]</scope>
    <source>
        <strain>AX4</strain>
    </source>
</reference>
<reference key="4">
    <citation type="journal article" date="2003" name="BMC Genomics">
        <title>Identification and phylogenetic analysis of Dictyostelium discoideum kinesin proteins.</title>
        <authorList>
            <person name="Kollmar M."/>
            <person name="Gloeckner G."/>
        </authorList>
    </citation>
    <scope>IDENTIFICATION</scope>
    <scope>NOMENCLATURE</scope>
</reference>
<name>KIF5_DICDI</name>
<feature type="chain" id="PRO_0000365580" description="Kinesin-related protein 5">
    <location>
        <begin position="1"/>
        <end position="990"/>
    </location>
</feature>
<feature type="domain" description="Kinesin motor" evidence="3">
    <location>
        <begin position="6"/>
        <end position="330"/>
    </location>
</feature>
<feature type="region of interest" description="Disordered" evidence="4">
    <location>
        <begin position="401"/>
        <end position="485"/>
    </location>
</feature>
<feature type="region of interest" description="Disordered" evidence="4">
    <location>
        <begin position="732"/>
        <end position="788"/>
    </location>
</feature>
<feature type="coiled-coil region" evidence="2">
    <location>
        <begin position="513"/>
        <end position="948"/>
    </location>
</feature>
<feature type="compositionally biased region" description="Gly residues" evidence="4">
    <location>
        <begin position="406"/>
        <end position="418"/>
    </location>
</feature>
<feature type="compositionally biased region" description="Low complexity" evidence="4">
    <location>
        <begin position="466"/>
        <end position="485"/>
    </location>
</feature>
<feature type="compositionally biased region" description="Low complexity" evidence="4">
    <location>
        <begin position="733"/>
        <end position="781"/>
    </location>
</feature>
<feature type="binding site" evidence="3">
    <location>
        <begin position="83"/>
        <end position="90"/>
    </location>
    <ligand>
        <name>ATP</name>
        <dbReference type="ChEBI" id="CHEBI:30616"/>
    </ligand>
</feature>
<protein>
    <recommendedName>
        <fullName>Kinesin-related protein 5</fullName>
    </recommendedName>
    <alternativeName>
        <fullName>Kinesin family member 5</fullName>
    </alternativeName>
    <alternativeName>
        <fullName>Kinesin-1</fullName>
    </alternativeName>
</protein>
<sequence>MATSCNIRVMCRFRPLNEREKALKENQTCVTFPDETQVIVSGQPFTFDRVFTPESTQKEVFESVKDTIHDVLLGYNGTLLAYGQTGSGKTFTMGSAAAESDFENVEQLGIIPRGNHLIFNTIAEESDGNAEFTIKCSYLEIYMENIQDLLNPKNNKQLKIRESKSQGIYVEGLTEEYVASEEDIMELIQVGESSRSVAKTNMNQRSSRSHSILIIAIEQKSSDGSKKRGKLNLVDLAGSEKVSKTGAEGIVLEQAKKINQSLSLLGNCIHALTDSKREHIPFRDSKLTRLLQDSLGGNTKTTLLVTASPHFNNVDETISTLKFGARAKSIKNNVKVNQEKSAAELQIIVNALTKELSILKVYSISLENLVNYFKSSSYQPGNPIPKELEPNKQNLLLLQQQSNSSSGGGGSGSSGGSSNGSLMMKPRSTTPTPPSINRPHSSASTHRHSIAITGTHSKEGSGGGLTSSISSSSISSMSSLSSSIDNDYNGSSLDDSNGSNGLFNPLAIVEMSIEMEKMKEDTQLLIEKFKDEISEITIQYQSTQEELNQCRQQLDQIKEQLEQQRSQFIKEQSLLKESERNATLDSTSKDLKIQSLISKIEDLRLLASQVIQYLERKRLSDDFDIGIFMGSQDGANGDSANMFSLISNSIDQGTYEDDVNIEDIIRYLSEEEVLTMQVKLQLQNKVHQLEQKIQQLVSDLNTTEINYNQSILQCQKFESENSLIKRKFKSMFSSSNNNNNNNNSPPSSPSSKLLIQSSNNNNNFDSNLNSSSLSSSLPSSNGIEQDQQVDHQVDHQVENDHLVNDEDNKLLDENSKLKENELKLLLEIKNLKLQSEKSNDETLKWKDELSIKSALYQNQILNLQNENQSLSNKLNVEKQQKQSSQSQQIEFATKLNDLIKSSEDDKELYRNEKNQMELEIASLKASLDEMDLKNKELQDQLISTQRLIGARRVVKIVRGGADSMKTALATKEVFGQFTLRKTENSKTLFQ</sequence>
<comment type="function">
    <text evidence="1 5">Microtubule-associated force-producing protein that plays a role in organelle transport. Its motor activity is directed toward the microtubule's plus end (By similarity). May connect microtubules to actin filaments. Associates with actin-based structures in cells and is likely involved in the organization of actin cytoskeletons in such structures.</text>
</comment>
<comment type="subunit">
    <text evidence="5">Interacts with actin.</text>
</comment>
<comment type="subcellular location">
    <subcellularLocation>
        <location evidence="5">Cytoplasm</location>
        <location evidence="5">Cytoskeleton</location>
    </subcellularLocation>
</comment>
<comment type="domain">
    <text evidence="1">Composed of three structural domains: a large globular N-terminal domain which is responsible for the motor activity of kinesin (it hydrolyzes ATP and binds microtubule), a central alpha-helical coiled coil domain that mediates the heavy chain dimerization; and a small globular C-terminal domain which interacts with other proteins, vesicles and membranous organelles.</text>
</comment>
<comment type="similarity">
    <text evidence="3">Belongs to the TRAFAC class myosin-kinesin ATPase superfamily. Kinesin family. Kinesin subfamily.</text>
</comment>